<evidence type="ECO:0000255" key="1">
    <source>
        <dbReference type="HAMAP-Rule" id="MF_01458"/>
    </source>
</evidence>
<evidence type="ECO:0000256" key="2">
    <source>
        <dbReference type="SAM" id="MobiDB-lite"/>
    </source>
</evidence>
<protein>
    <recommendedName>
        <fullName evidence="1">ATP-dependent zinc metalloprotease FtsH</fullName>
        <ecNumber evidence="1">3.4.24.-</ecNumber>
    </recommendedName>
</protein>
<feature type="chain" id="PRO_0000084651" description="ATP-dependent zinc metalloprotease FtsH">
    <location>
        <begin position="1"/>
        <end position="652"/>
    </location>
</feature>
<feature type="topological domain" description="Cytoplasmic" evidence="1">
    <location>
        <begin position="1"/>
        <end position="11"/>
    </location>
</feature>
<feature type="transmembrane region" description="Helical" evidence="1">
    <location>
        <begin position="12"/>
        <end position="32"/>
    </location>
</feature>
<feature type="topological domain" description="Extracellular" evidence="1">
    <location>
        <begin position="33"/>
        <end position="131"/>
    </location>
</feature>
<feature type="transmembrane region" description="Helical" evidence="1">
    <location>
        <begin position="132"/>
        <end position="152"/>
    </location>
</feature>
<feature type="topological domain" description="Cytoplasmic" evidence="1">
    <location>
        <begin position="153"/>
        <end position="652"/>
    </location>
</feature>
<feature type="region of interest" description="Disordered" evidence="2">
    <location>
        <begin position="628"/>
        <end position="652"/>
    </location>
</feature>
<feature type="compositionally biased region" description="Basic and acidic residues" evidence="2">
    <location>
        <begin position="634"/>
        <end position="652"/>
    </location>
</feature>
<feature type="active site" evidence="1">
    <location>
        <position position="450"/>
    </location>
</feature>
<feature type="binding site" evidence="1">
    <location>
        <begin position="227"/>
        <end position="234"/>
    </location>
    <ligand>
        <name>ATP</name>
        <dbReference type="ChEBI" id="CHEBI:30616"/>
    </ligand>
</feature>
<feature type="binding site" evidence="1">
    <location>
        <position position="449"/>
    </location>
    <ligand>
        <name>Zn(2+)</name>
        <dbReference type="ChEBI" id="CHEBI:29105"/>
        <note>catalytic</note>
    </ligand>
</feature>
<feature type="binding site" evidence="1">
    <location>
        <position position="453"/>
    </location>
    <ligand>
        <name>Zn(2+)</name>
        <dbReference type="ChEBI" id="CHEBI:29105"/>
        <note>catalytic</note>
    </ligand>
</feature>
<feature type="binding site" evidence="1">
    <location>
        <position position="525"/>
    </location>
    <ligand>
        <name>Zn(2+)</name>
        <dbReference type="ChEBI" id="CHEBI:29105"/>
        <note>catalytic</note>
    </ligand>
</feature>
<accession>P59652</accession>
<gene>
    <name evidence="1" type="primary">ftsH</name>
    <name type="ordered locus">spr0012</name>
</gene>
<keyword id="KW-0067">ATP-binding</keyword>
<keyword id="KW-1003">Cell membrane</keyword>
<keyword id="KW-0378">Hydrolase</keyword>
<keyword id="KW-0472">Membrane</keyword>
<keyword id="KW-0479">Metal-binding</keyword>
<keyword id="KW-0482">Metalloprotease</keyword>
<keyword id="KW-0547">Nucleotide-binding</keyword>
<keyword id="KW-0645">Protease</keyword>
<keyword id="KW-1185">Reference proteome</keyword>
<keyword id="KW-0812">Transmembrane</keyword>
<keyword id="KW-1133">Transmembrane helix</keyword>
<keyword id="KW-0862">Zinc</keyword>
<organism>
    <name type="scientific">Streptococcus pneumoniae (strain ATCC BAA-255 / R6)</name>
    <dbReference type="NCBI Taxonomy" id="171101"/>
    <lineage>
        <taxon>Bacteria</taxon>
        <taxon>Bacillati</taxon>
        <taxon>Bacillota</taxon>
        <taxon>Bacilli</taxon>
        <taxon>Lactobacillales</taxon>
        <taxon>Streptococcaceae</taxon>
        <taxon>Streptococcus</taxon>
    </lineage>
</organism>
<proteinExistence type="inferred from homology"/>
<name>FTSH_STRR6</name>
<comment type="function">
    <text evidence="1">Acts as a processive, ATP-dependent zinc metallopeptidase for both cytoplasmic and membrane proteins. Plays a role in the quality control of integral membrane proteins.</text>
</comment>
<comment type="cofactor">
    <cofactor evidence="1">
        <name>Zn(2+)</name>
        <dbReference type="ChEBI" id="CHEBI:29105"/>
    </cofactor>
    <text evidence="1">Binds 1 zinc ion per subunit.</text>
</comment>
<comment type="subunit">
    <text evidence="1">Homohexamer.</text>
</comment>
<comment type="subcellular location">
    <subcellularLocation>
        <location evidence="1">Cell membrane</location>
        <topology evidence="1">Multi-pass membrane protein</topology>
        <orientation evidence="1">Cytoplasmic side</orientation>
    </subcellularLocation>
</comment>
<comment type="similarity">
    <text evidence="1">In the central section; belongs to the AAA ATPase family.</text>
</comment>
<comment type="similarity">
    <text evidence="1">In the C-terminal section; belongs to the peptidase M41 family.</text>
</comment>
<reference key="1">
    <citation type="journal article" date="2001" name="J. Bacteriol.">
        <title>Genome of the bacterium Streptococcus pneumoniae strain R6.</title>
        <authorList>
            <person name="Hoskins J."/>
            <person name="Alborn W.E. Jr."/>
            <person name="Arnold J."/>
            <person name="Blaszczak L.C."/>
            <person name="Burgett S."/>
            <person name="DeHoff B.S."/>
            <person name="Estrem S.T."/>
            <person name="Fritz L."/>
            <person name="Fu D.-J."/>
            <person name="Fuller W."/>
            <person name="Geringer C."/>
            <person name="Gilmour R."/>
            <person name="Glass J.S."/>
            <person name="Khoja H."/>
            <person name="Kraft A.R."/>
            <person name="Lagace R.E."/>
            <person name="LeBlanc D.J."/>
            <person name="Lee L.N."/>
            <person name="Lefkowitz E.J."/>
            <person name="Lu J."/>
            <person name="Matsushima P."/>
            <person name="McAhren S.M."/>
            <person name="McHenney M."/>
            <person name="McLeaster K."/>
            <person name="Mundy C.W."/>
            <person name="Nicas T.I."/>
            <person name="Norris F.H."/>
            <person name="O'Gara M."/>
            <person name="Peery R.B."/>
            <person name="Robertson G.T."/>
            <person name="Rockey P."/>
            <person name="Sun P.-M."/>
            <person name="Winkler M.E."/>
            <person name="Yang Y."/>
            <person name="Young-Bellido M."/>
            <person name="Zhao G."/>
            <person name="Zook C.A."/>
            <person name="Baltz R.H."/>
            <person name="Jaskunas S.R."/>
            <person name="Rosteck P.R. Jr."/>
            <person name="Skatrud P.L."/>
            <person name="Glass J.I."/>
        </authorList>
    </citation>
    <scope>NUCLEOTIDE SEQUENCE [LARGE SCALE GENOMIC DNA]</scope>
    <source>
        <strain>ATCC BAA-255 / R6</strain>
    </source>
</reference>
<sequence length="652" mass="71254">MKKQNNGLIKNPFLWLLFIFFLVTGFQYFYSGNNSGGSQQINYTELVQEITDGNVKELTYQPNGSVIEVSGVYKNPKTSKEGTGIQFFTPSVTKVEKFTSTILPADTTVSELQKLATDHKAEVTVKHESSSGIWINLLVSIVPFGILFFFLFSMMGNMGGGNGRNPMSFGRSKAKAANKEDIKVRFSDVAGAEEEKQELVEVVEFLKDPKRFTKLGARIPAGVLLEGPPGTGKTLLAKAVAGEAGVPFFSISGSDFVEMFVGVGASRVRSLFEDAKKAAPAIIFIDEIDAVGRQRGVGLGGGNDEREQTLNQLLIEMDGFEGNEGIIVIAATNRSDVLDPALLRPGRFDRKVLVGRPDVKGREAILKVHAKNKPLAEDVDLKLVAQQTPGFVGADLENVLNEAALVAARRNKSIIDASDIDEAEDRVIAGPSKKDKTVSQKERELVAYHEAGHTIVGLVLSNARVVHKVTIVPRGRAGGYMIALPKEDQMLLSKEDMKEQLAGLMGGRVAEEIIFNVQTTGASNDFEQATQMARAMVTEYGMSEKLGPVQYEGNHAMLGAQSPQKSISEQTAYEIDEEVRSLLNEARNKAAEIIQSNRETHKLIAEALLKYETLDSTQIKALYETGKMPEAVEEESHALSYDEVKSKMNDEK</sequence>
<dbReference type="EC" id="3.4.24.-" evidence="1"/>
<dbReference type="EMBL" id="AE007317">
    <property type="protein sequence ID" value="AAK98816.1"/>
    <property type="molecule type" value="Genomic_DNA"/>
</dbReference>
<dbReference type="RefSeq" id="NP_357606.1">
    <property type="nucleotide sequence ID" value="NC_003098.1"/>
</dbReference>
<dbReference type="RefSeq" id="WP_000744557.1">
    <property type="nucleotide sequence ID" value="NC_003098.1"/>
</dbReference>
<dbReference type="SMR" id="P59652"/>
<dbReference type="STRING" id="171101.spr0012"/>
<dbReference type="MEROPS" id="M41.009"/>
<dbReference type="KEGG" id="spr:spr0012"/>
<dbReference type="PATRIC" id="fig|171101.6.peg.13"/>
<dbReference type="eggNOG" id="COG0465">
    <property type="taxonomic scope" value="Bacteria"/>
</dbReference>
<dbReference type="HOGENOM" id="CLU_000688_16_2_9"/>
<dbReference type="Proteomes" id="UP000000586">
    <property type="component" value="Chromosome"/>
</dbReference>
<dbReference type="GO" id="GO:0005886">
    <property type="term" value="C:plasma membrane"/>
    <property type="evidence" value="ECO:0007669"/>
    <property type="project" value="UniProtKB-SubCell"/>
</dbReference>
<dbReference type="GO" id="GO:0005524">
    <property type="term" value="F:ATP binding"/>
    <property type="evidence" value="ECO:0007669"/>
    <property type="project" value="UniProtKB-UniRule"/>
</dbReference>
<dbReference type="GO" id="GO:0016887">
    <property type="term" value="F:ATP hydrolysis activity"/>
    <property type="evidence" value="ECO:0007669"/>
    <property type="project" value="UniProtKB-UniRule"/>
</dbReference>
<dbReference type="GO" id="GO:0004176">
    <property type="term" value="F:ATP-dependent peptidase activity"/>
    <property type="evidence" value="ECO:0000318"/>
    <property type="project" value="GO_Central"/>
</dbReference>
<dbReference type="GO" id="GO:0004222">
    <property type="term" value="F:metalloendopeptidase activity"/>
    <property type="evidence" value="ECO:0007669"/>
    <property type="project" value="InterPro"/>
</dbReference>
<dbReference type="GO" id="GO:0008270">
    <property type="term" value="F:zinc ion binding"/>
    <property type="evidence" value="ECO:0007669"/>
    <property type="project" value="UniProtKB-UniRule"/>
</dbReference>
<dbReference type="GO" id="GO:0030163">
    <property type="term" value="P:protein catabolic process"/>
    <property type="evidence" value="ECO:0007669"/>
    <property type="project" value="UniProtKB-UniRule"/>
</dbReference>
<dbReference type="GO" id="GO:0006508">
    <property type="term" value="P:proteolysis"/>
    <property type="evidence" value="ECO:0000318"/>
    <property type="project" value="GO_Central"/>
</dbReference>
<dbReference type="CDD" id="cd19501">
    <property type="entry name" value="RecA-like_FtsH"/>
    <property type="match status" value="1"/>
</dbReference>
<dbReference type="FunFam" id="1.10.8.60:FF:000001">
    <property type="entry name" value="ATP-dependent zinc metalloprotease FtsH"/>
    <property type="match status" value="1"/>
</dbReference>
<dbReference type="FunFam" id="1.20.58.760:FF:000001">
    <property type="entry name" value="ATP-dependent zinc metalloprotease FtsH"/>
    <property type="match status" value="1"/>
</dbReference>
<dbReference type="FunFam" id="3.40.50.300:FF:000001">
    <property type="entry name" value="ATP-dependent zinc metalloprotease FtsH"/>
    <property type="match status" value="1"/>
</dbReference>
<dbReference type="Gene3D" id="1.10.8.60">
    <property type="match status" value="1"/>
</dbReference>
<dbReference type="Gene3D" id="3.40.50.300">
    <property type="entry name" value="P-loop containing nucleotide triphosphate hydrolases"/>
    <property type="match status" value="1"/>
</dbReference>
<dbReference type="Gene3D" id="1.20.58.760">
    <property type="entry name" value="Peptidase M41"/>
    <property type="match status" value="1"/>
</dbReference>
<dbReference type="HAMAP" id="MF_01458">
    <property type="entry name" value="FtsH"/>
    <property type="match status" value="1"/>
</dbReference>
<dbReference type="InterPro" id="IPR003593">
    <property type="entry name" value="AAA+_ATPase"/>
</dbReference>
<dbReference type="InterPro" id="IPR041569">
    <property type="entry name" value="AAA_lid_3"/>
</dbReference>
<dbReference type="InterPro" id="IPR003959">
    <property type="entry name" value="ATPase_AAA_core"/>
</dbReference>
<dbReference type="InterPro" id="IPR003960">
    <property type="entry name" value="ATPase_AAA_CS"/>
</dbReference>
<dbReference type="InterPro" id="IPR005936">
    <property type="entry name" value="FtsH"/>
</dbReference>
<dbReference type="InterPro" id="IPR027417">
    <property type="entry name" value="P-loop_NTPase"/>
</dbReference>
<dbReference type="InterPro" id="IPR011546">
    <property type="entry name" value="Pept_M41_FtsH_extracell"/>
</dbReference>
<dbReference type="InterPro" id="IPR000642">
    <property type="entry name" value="Peptidase_M41"/>
</dbReference>
<dbReference type="InterPro" id="IPR037219">
    <property type="entry name" value="Peptidase_M41-like"/>
</dbReference>
<dbReference type="NCBIfam" id="TIGR01241">
    <property type="entry name" value="FtsH_fam"/>
    <property type="match status" value="1"/>
</dbReference>
<dbReference type="PANTHER" id="PTHR23076:SF113">
    <property type="entry name" value="ATP-DEPENDENT ZINC METALLOPROTEASE FTSH 1, CHLOROPLASTIC-RELATED"/>
    <property type="match status" value="1"/>
</dbReference>
<dbReference type="PANTHER" id="PTHR23076">
    <property type="entry name" value="METALLOPROTEASE M41 FTSH"/>
    <property type="match status" value="1"/>
</dbReference>
<dbReference type="Pfam" id="PF00004">
    <property type="entry name" value="AAA"/>
    <property type="match status" value="1"/>
</dbReference>
<dbReference type="Pfam" id="PF17862">
    <property type="entry name" value="AAA_lid_3"/>
    <property type="match status" value="1"/>
</dbReference>
<dbReference type="Pfam" id="PF06480">
    <property type="entry name" value="FtsH_ext"/>
    <property type="match status" value="1"/>
</dbReference>
<dbReference type="Pfam" id="PF01434">
    <property type="entry name" value="Peptidase_M41"/>
    <property type="match status" value="1"/>
</dbReference>
<dbReference type="SMART" id="SM00382">
    <property type="entry name" value="AAA"/>
    <property type="match status" value="1"/>
</dbReference>
<dbReference type="SUPFAM" id="SSF140990">
    <property type="entry name" value="FtsH protease domain-like"/>
    <property type="match status" value="1"/>
</dbReference>
<dbReference type="SUPFAM" id="SSF52540">
    <property type="entry name" value="P-loop containing nucleoside triphosphate hydrolases"/>
    <property type="match status" value="1"/>
</dbReference>
<dbReference type="PROSITE" id="PS00674">
    <property type="entry name" value="AAA"/>
    <property type="match status" value="1"/>
</dbReference>